<name>SELO_VIBPA</name>
<sequence>MSIWQRVSFTHRFSQLPSAFYTLVEPQPLDNTRWVAWNGEFAQQFGLPAAQNDELLAVFSGQSEFEPFRPLAMKYAGHQFGVYNPDLGDGRGLLLAEIEHQNGTWFDIHLKGAGLTPYSRMGDGRAVLRSTIREYLCSEAMAGLGIPTTRALGMVVSDTPVYREKTEFGAMLIRMAETHVRFGHFEHLFYTNQLAEQKLLADKVIEWHFADCASAEKPYAAMFGEIVQKTADMIAYWQAYGFAHGVMNTDNMSILGQTFDYGPFGFLDDYEPGYICNHSDYQGRYAFEQQPRIALWNLSALAHALSPLVEREDLEQALSQFEGRLSQQFSRLMRSKLGLKTKIAEDGRLFESMFELLNQNHTDYTRFFRALSNLDKQPAQEVIDLFIDREAAQAWLDLYLARCELEVDEIGEPISAEQRSEQMRQTNPKYILRNYLAQLAIDKAEEGDFSEVHRLAEILRHPYDSQPEFEAYAKLPPEWGKKMEISCSS</sequence>
<keyword id="KW-0067">ATP-binding</keyword>
<keyword id="KW-0460">Magnesium</keyword>
<keyword id="KW-0464">Manganese</keyword>
<keyword id="KW-0479">Metal-binding</keyword>
<keyword id="KW-0547">Nucleotide-binding</keyword>
<keyword id="KW-0548">Nucleotidyltransferase</keyword>
<keyword id="KW-0808">Transferase</keyword>
<proteinExistence type="inferred from homology"/>
<comment type="function">
    <text evidence="1">Nucleotidyltransferase involved in the post-translational modification of proteins. It can catalyze the addition of adenosine monophosphate (AMP) or uridine monophosphate (UMP) to a protein, resulting in modifications known as AMPylation and UMPylation.</text>
</comment>
<comment type="catalytic activity">
    <reaction evidence="1">
        <text>L-seryl-[protein] + ATP = 3-O-(5'-adenylyl)-L-seryl-[protein] + diphosphate</text>
        <dbReference type="Rhea" id="RHEA:58120"/>
        <dbReference type="Rhea" id="RHEA-COMP:9863"/>
        <dbReference type="Rhea" id="RHEA-COMP:15073"/>
        <dbReference type="ChEBI" id="CHEBI:29999"/>
        <dbReference type="ChEBI" id="CHEBI:30616"/>
        <dbReference type="ChEBI" id="CHEBI:33019"/>
        <dbReference type="ChEBI" id="CHEBI:142516"/>
        <dbReference type="EC" id="2.7.7.108"/>
    </reaction>
</comment>
<comment type="catalytic activity">
    <reaction evidence="1">
        <text>L-threonyl-[protein] + ATP = 3-O-(5'-adenylyl)-L-threonyl-[protein] + diphosphate</text>
        <dbReference type="Rhea" id="RHEA:54292"/>
        <dbReference type="Rhea" id="RHEA-COMP:11060"/>
        <dbReference type="Rhea" id="RHEA-COMP:13847"/>
        <dbReference type="ChEBI" id="CHEBI:30013"/>
        <dbReference type="ChEBI" id="CHEBI:30616"/>
        <dbReference type="ChEBI" id="CHEBI:33019"/>
        <dbReference type="ChEBI" id="CHEBI:138113"/>
        <dbReference type="EC" id="2.7.7.108"/>
    </reaction>
</comment>
<comment type="catalytic activity">
    <reaction evidence="1">
        <text>L-tyrosyl-[protein] + ATP = O-(5'-adenylyl)-L-tyrosyl-[protein] + diphosphate</text>
        <dbReference type="Rhea" id="RHEA:54288"/>
        <dbReference type="Rhea" id="RHEA-COMP:10136"/>
        <dbReference type="Rhea" id="RHEA-COMP:13846"/>
        <dbReference type="ChEBI" id="CHEBI:30616"/>
        <dbReference type="ChEBI" id="CHEBI:33019"/>
        <dbReference type="ChEBI" id="CHEBI:46858"/>
        <dbReference type="ChEBI" id="CHEBI:83624"/>
        <dbReference type="EC" id="2.7.7.108"/>
    </reaction>
</comment>
<comment type="catalytic activity">
    <reaction evidence="1">
        <text>L-histidyl-[protein] + UTP = N(tele)-(5'-uridylyl)-L-histidyl-[protein] + diphosphate</text>
        <dbReference type="Rhea" id="RHEA:83891"/>
        <dbReference type="Rhea" id="RHEA-COMP:9745"/>
        <dbReference type="Rhea" id="RHEA-COMP:20239"/>
        <dbReference type="ChEBI" id="CHEBI:29979"/>
        <dbReference type="ChEBI" id="CHEBI:33019"/>
        <dbReference type="ChEBI" id="CHEBI:46398"/>
        <dbReference type="ChEBI" id="CHEBI:233474"/>
    </reaction>
</comment>
<comment type="catalytic activity">
    <reaction evidence="1">
        <text>L-seryl-[protein] + UTP = O-(5'-uridylyl)-L-seryl-[protein] + diphosphate</text>
        <dbReference type="Rhea" id="RHEA:64604"/>
        <dbReference type="Rhea" id="RHEA-COMP:9863"/>
        <dbReference type="Rhea" id="RHEA-COMP:16635"/>
        <dbReference type="ChEBI" id="CHEBI:29999"/>
        <dbReference type="ChEBI" id="CHEBI:33019"/>
        <dbReference type="ChEBI" id="CHEBI:46398"/>
        <dbReference type="ChEBI" id="CHEBI:156051"/>
    </reaction>
</comment>
<comment type="catalytic activity">
    <reaction evidence="1">
        <text>L-tyrosyl-[protein] + UTP = O-(5'-uridylyl)-L-tyrosyl-[protein] + diphosphate</text>
        <dbReference type="Rhea" id="RHEA:83887"/>
        <dbReference type="Rhea" id="RHEA-COMP:10136"/>
        <dbReference type="Rhea" id="RHEA-COMP:20238"/>
        <dbReference type="ChEBI" id="CHEBI:33019"/>
        <dbReference type="ChEBI" id="CHEBI:46398"/>
        <dbReference type="ChEBI" id="CHEBI:46858"/>
        <dbReference type="ChEBI" id="CHEBI:90602"/>
    </reaction>
</comment>
<comment type="cofactor">
    <cofactor evidence="1">
        <name>Mg(2+)</name>
        <dbReference type="ChEBI" id="CHEBI:18420"/>
    </cofactor>
    <cofactor evidence="1">
        <name>Mn(2+)</name>
        <dbReference type="ChEBI" id="CHEBI:29035"/>
    </cofactor>
</comment>
<comment type="similarity">
    <text evidence="1">Belongs to the SELO family.</text>
</comment>
<evidence type="ECO:0000255" key="1">
    <source>
        <dbReference type="HAMAP-Rule" id="MF_00692"/>
    </source>
</evidence>
<organism>
    <name type="scientific">Vibrio parahaemolyticus serotype O3:K6 (strain RIMD 2210633)</name>
    <dbReference type="NCBI Taxonomy" id="223926"/>
    <lineage>
        <taxon>Bacteria</taxon>
        <taxon>Pseudomonadati</taxon>
        <taxon>Pseudomonadota</taxon>
        <taxon>Gammaproteobacteria</taxon>
        <taxon>Vibrionales</taxon>
        <taxon>Vibrionaceae</taxon>
        <taxon>Vibrio</taxon>
    </lineage>
</organism>
<gene>
    <name evidence="1" type="primary">ydiU</name>
    <name evidence="1" type="synonym">selO</name>
    <name type="ordered locus">VP0909</name>
</gene>
<accession>Q87R88</accession>
<feature type="chain" id="PRO_0000121435" description="Protein nucleotidyltransferase YdiU">
    <location>
        <begin position="1"/>
        <end position="489"/>
    </location>
</feature>
<feature type="active site" description="Proton acceptor" evidence="1">
    <location>
        <position position="250"/>
    </location>
</feature>
<feature type="binding site" evidence="1">
    <location>
        <position position="88"/>
    </location>
    <ligand>
        <name>ATP</name>
        <dbReference type="ChEBI" id="CHEBI:30616"/>
    </ligand>
</feature>
<feature type="binding site" evidence="1">
    <location>
        <position position="90"/>
    </location>
    <ligand>
        <name>ATP</name>
        <dbReference type="ChEBI" id="CHEBI:30616"/>
    </ligand>
</feature>
<feature type="binding site" evidence="1">
    <location>
        <position position="91"/>
    </location>
    <ligand>
        <name>ATP</name>
        <dbReference type="ChEBI" id="CHEBI:30616"/>
    </ligand>
</feature>
<feature type="binding site" evidence="1">
    <location>
        <position position="111"/>
    </location>
    <ligand>
        <name>ATP</name>
        <dbReference type="ChEBI" id="CHEBI:30616"/>
    </ligand>
</feature>
<feature type="binding site" evidence="1">
    <location>
        <position position="123"/>
    </location>
    <ligand>
        <name>ATP</name>
        <dbReference type="ChEBI" id="CHEBI:30616"/>
    </ligand>
</feature>
<feature type="binding site" evidence="1">
    <location>
        <position position="124"/>
    </location>
    <ligand>
        <name>ATP</name>
        <dbReference type="ChEBI" id="CHEBI:30616"/>
    </ligand>
</feature>
<feature type="binding site" evidence="1">
    <location>
        <position position="174"/>
    </location>
    <ligand>
        <name>ATP</name>
        <dbReference type="ChEBI" id="CHEBI:30616"/>
    </ligand>
</feature>
<feature type="binding site" evidence="1">
    <location>
        <position position="181"/>
    </location>
    <ligand>
        <name>ATP</name>
        <dbReference type="ChEBI" id="CHEBI:30616"/>
    </ligand>
</feature>
<feature type="binding site" evidence="1">
    <location>
        <position position="251"/>
    </location>
    <ligand>
        <name>Mg(2+)</name>
        <dbReference type="ChEBI" id="CHEBI:18420"/>
    </ligand>
</feature>
<feature type="binding site" evidence="1">
    <location>
        <position position="260"/>
    </location>
    <ligand>
        <name>ATP</name>
        <dbReference type="ChEBI" id="CHEBI:30616"/>
    </ligand>
</feature>
<feature type="binding site" evidence="1">
    <location>
        <position position="260"/>
    </location>
    <ligand>
        <name>Mg(2+)</name>
        <dbReference type="ChEBI" id="CHEBI:18420"/>
    </ligand>
</feature>
<protein>
    <recommendedName>
        <fullName evidence="1">Protein nucleotidyltransferase YdiU</fullName>
        <ecNumber evidence="1">2.7.7.-</ecNumber>
    </recommendedName>
    <alternativeName>
        <fullName evidence="1">Protein adenylyltransferase YdiU</fullName>
        <ecNumber evidence="1">2.7.7.108</ecNumber>
    </alternativeName>
    <alternativeName>
        <fullName evidence="1">Protein uridylyltransferase YdiU</fullName>
        <ecNumber evidence="1">2.7.7.-</ecNumber>
    </alternativeName>
</protein>
<dbReference type="EC" id="2.7.7.-" evidence="1"/>
<dbReference type="EC" id="2.7.7.108" evidence="1"/>
<dbReference type="EMBL" id="BA000031">
    <property type="protein sequence ID" value="BAC59172.1"/>
    <property type="molecule type" value="Genomic_DNA"/>
</dbReference>
<dbReference type="RefSeq" id="NP_797288.1">
    <property type="nucleotide sequence ID" value="NC_004603.1"/>
</dbReference>
<dbReference type="RefSeq" id="WP_005479031.1">
    <property type="nucleotide sequence ID" value="NC_004603.1"/>
</dbReference>
<dbReference type="SMR" id="Q87R88"/>
<dbReference type="GeneID" id="1188407"/>
<dbReference type="KEGG" id="vpa:VP0909"/>
<dbReference type="PATRIC" id="fig|223926.6.peg.861"/>
<dbReference type="eggNOG" id="COG0397">
    <property type="taxonomic scope" value="Bacteria"/>
</dbReference>
<dbReference type="HOGENOM" id="CLU_010245_4_0_6"/>
<dbReference type="Proteomes" id="UP000002493">
    <property type="component" value="Chromosome 1"/>
</dbReference>
<dbReference type="GO" id="GO:0070733">
    <property type="term" value="F:AMPylase activity"/>
    <property type="evidence" value="ECO:0007669"/>
    <property type="project" value="TreeGrafter"/>
</dbReference>
<dbReference type="GO" id="GO:0005524">
    <property type="term" value="F:ATP binding"/>
    <property type="evidence" value="ECO:0007669"/>
    <property type="project" value="UniProtKB-UniRule"/>
</dbReference>
<dbReference type="GO" id="GO:0000287">
    <property type="term" value="F:magnesium ion binding"/>
    <property type="evidence" value="ECO:0007669"/>
    <property type="project" value="UniProtKB-UniRule"/>
</dbReference>
<dbReference type="HAMAP" id="MF_00692">
    <property type="entry name" value="YdiU_SelO"/>
    <property type="match status" value="1"/>
</dbReference>
<dbReference type="InterPro" id="IPR003846">
    <property type="entry name" value="SelO"/>
</dbReference>
<dbReference type="NCBIfam" id="NF000658">
    <property type="entry name" value="PRK00029.1"/>
    <property type="match status" value="1"/>
</dbReference>
<dbReference type="PANTHER" id="PTHR32057">
    <property type="entry name" value="PROTEIN ADENYLYLTRANSFERASE SELO, MITOCHONDRIAL"/>
    <property type="match status" value="1"/>
</dbReference>
<dbReference type="PANTHER" id="PTHR32057:SF14">
    <property type="entry name" value="PROTEIN ADENYLYLTRANSFERASE SELO, MITOCHONDRIAL"/>
    <property type="match status" value="1"/>
</dbReference>
<dbReference type="Pfam" id="PF02696">
    <property type="entry name" value="SelO"/>
    <property type="match status" value="1"/>
</dbReference>
<reference key="1">
    <citation type="journal article" date="2003" name="Lancet">
        <title>Genome sequence of Vibrio parahaemolyticus: a pathogenic mechanism distinct from that of V. cholerae.</title>
        <authorList>
            <person name="Makino K."/>
            <person name="Oshima K."/>
            <person name="Kurokawa K."/>
            <person name="Yokoyama K."/>
            <person name="Uda T."/>
            <person name="Tagomori K."/>
            <person name="Iijima Y."/>
            <person name="Najima M."/>
            <person name="Nakano M."/>
            <person name="Yamashita A."/>
            <person name="Kubota Y."/>
            <person name="Kimura S."/>
            <person name="Yasunaga T."/>
            <person name="Honda T."/>
            <person name="Shinagawa H."/>
            <person name="Hattori M."/>
            <person name="Iida T."/>
        </authorList>
    </citation>
    <scope>NUCLEOTIDE SEQUENCE [LARGE SCALE GENOMIC DNA]</scope>
    <source>
        <strain>RIMD 2210633</strain>
    </source>
</reference>